<dbReference type="EMBL" id="AE000783">
    <property type="protein sequence ID" value="AAC66493.1"/>
    <property type="molecule type" value="Genomic_DNA"/>
</dbReference>
<dbReference type="PIR" id="A70114">
    <property type="entry name" value="A70114"/>
</dbReference>
<dbReference type="RefSeq" id="NP_212247.1">
    <property type="nucleotide sequence ID" value="NC_001318.1"/>
</dbReference>
<dbReference type="RefSeq" id="WP_002556715.1">
    <property type="nucleotide sequence ID" value="NC_001318.1"/>
</dbReference>
<dbReference type="PDB" id="8FMW">
    <property type="method" value="EM"/>
    <property type="resolution" value="2.86 A"/>
    <property type="chains" value="R=34-96"/>
</dbReference>
<dbReference type="PDBsum" id="8FMW"/>
<dbReference type="EMDB" id="EMD-29298"/>
<dbReference type="SMR" id="O51140"/>
<dbReference type="STRING" id="224326.BB_0113"/>
<dbReference type="PaxDb" id="224326-BB_0113"/>
<dbReference type="EnsemblBacteria" id="AAC66493">
    <property type="protein sequence ID" value="AAC66493"/>
    <property type="gene ID" value="BB_0113"/>
</dbReference>
<dbReference type="GeneID" id="56568105"/>
<dbReference type="KEGG" id="bbu:BB_0113"/>
<dbReference type="PATRIC" id="fig|224326.49.peg.511"/>
<dbReference type="HOGENOM" id="CLU_148710_0_2_12"/>
<dbReference type="OrthoDB" id="9812008at2"/>
<dbReference type="Proteomes" id="UP000001807">
    <property type="component" value="Chromosome"/>
</dbReference>
<dbReference type="GO" id="GO:0022627">
    <property type="term" value="C:cytosolic small ribosomal subunit"/>
    <property type="evidence" value="ECO:0007669"/>
    <property type="project" value="TreeGrafter"/>
</dbReference>
<dbReference type="GO" id="GO:0070181">
    <property type="term" value="F:small ribosomal subunit rRNA binding"/>
    <property type="evidence" value="ECO:0007669"/>
    <property type="project" value="TreeGrafter"/>
</dbReference>
<dbReference type="GO" id="GO:0003735">
    <property type="term" value="F:structural constituent of ribosome"/>
    <property type="evidence" value="ECO:0007669"/>
    <property type="project" value="InterPro"/>
</dbReference>
<dbReference type="GO" id="GO:0006412">
    <property type="term" value="P:translation"/>
    <property type="evidence" value="ECO:0007669"/>
    <property type="project" value="UniProtKB-UniRule"/>
</dbReference>
<dbReference type="Gene3D" id="4.10.640.10">
    <property type="entry name" value="Ribosomal protein S18"/>
    <property type="match status" value="1"/>
</dbReference>
<dbReference type="HAMAP" id="MF_00270">
    <property type="entry name" value="Ribosomal_bS18"/>
    <property type="match status" value="1"/>
</dbReference>
<dbReference type="InterPro" id="IPR001648">
    <property type="entry name" value="Ribosomal_bS18"/>
</dbReference>
<dbReference type="InterPro" id="IPR018275">
    <property type="entry name" value="Ribosomal_bS18_CS"/>
</dbReference>
<dbReference type="InterPro" id="IPR036870">
    <property type="entry name" value="Ribosomal_bS18_sf"/>
</dbReference>
<dbReference type="NCBIfam" id="TIGR00165">
    <property type="entry name" value="S18"/>
    <property type="match status" value="1"/>
</dbReference>
<dbReference type="PANTHER" id="PTHR13479">
    <property type="entry name" value="30S RIBOSOMAL PROTEIN S18"/>
    <property type="match status" value="1"/>
</dbReference>
<dbReference type="PANTHER" id="PTHR13479:SF40">
    <property type="entry name" value="SMALL RIBOSOMAL SUBUNIT PROTEIN BS18M"/>
    <property type="match status" value="1"/>
</dbReference>
<dbReference type="Pfam" id="PF01084">
    <property type="entry name" value="Ribosomal_S18"/>
    <property type="match status" value="1"/>
</dbReference>
<dbReference type="PRINTS" id="PR00974">
    <property type="entry name" value="RIBOSOMALS18"/>
</dbReference>
<dbReference type="SUPFAM" id="SSF46911">
    <property type="entry name" value="Ribosomal protein S18"/>
    <property type="match status" value="1"/>
</dbReference>
<dbReference type="PROSITE" id="PS00057">
    <property type="entry name" value="RIBOSOMAL_S18"/>
    <property type="match status" value="1"/>
</dbReference>
<proteinExistence type="evidence at protein level"/>
<reference key="1">
    <citation type="journal article" date="1997" name="Nature">
        <title>Genomic sequence of a Lyme disease spirochaete, Borrelia burgdorferi.</title>
        <authorList>
            <person name="Fraser C.M."/>
            <person name="Casjens S."/>
            <person name="Huang W.M."/>
            <person name="Sutton G.G."/>
            <person name="Clayton R.A."/>
            <person name="Lathigra R."/>
            <person name="White O."/>
            <person name="Ketchum K.A."/>
            <person name="Dodson R.J."/>
            <person name="Hickey E.K."/>
            <person name="Gwinn M.L."/>
            <person name="Dougherty B.A."/>
            <person name="Tomb J.-F."/>
            <person name="Fleischmann R.D."/>
            <person name="Richardson D.L."/>
            <person name="Peterson J.D."/>
            <person name="Kerlavage A.R."/>
            <person name="Quackenbush J."/>
            <person name="Salzberg S.L."/>
            <person name="Hanson M."/>
            <person name="van Vugt R."/>
            <person name="Palmer N."/>
            <person name="Adams M.D."/>
            <person name="Gocayne J.D."/>
            <person name="Weidman J.F."/>
            <person name="Utterback T.R."/>
            <person name="Watthey L."/>
            <person name="McDonald L.A."/>
            <person name="Artiach P."/>
            <person name="Bowman C."/>
            <person name="Garland S.A."/>
            <person name="Fujii C."/>
            <person name="Cotton M.D."/>
            <person name="Horst K."/>
            <person name="Roberts K.M."/>
            <person name="Hatch B."/>
            <person name="Smith H.O."/>
            <person name="Venter J.C."/>
        </authorList>
    </citation>
    <scope>NUCLEOTIDE SEQUENCE [LARGE SCALE GENOMIC DNA]</scope>
    <source>
        <strain>ATCC 35210 / DSM 4680 / CIP 102532 / B31</strain>
    </source>
</reference>
<name>RS18_BORBU</name>
<sequence length="96" mass="11614">MYKDRDTNQRDSRFENQQDGFKKNSNFRFFKRKSCKFCDSGKHPDYKDFDFLKKFITEQGKILPKRITGTSAKHQRRLALEIKRARYMALLPFVKK</sequence>
<organism>
    <name type="scientific">Borreliella burgdorferi (strain ATCC 35210 / DSM 4680 / CIP 102532 / B31)</name>
    <name type="common">Borrelia burgdorferi</name>
    <dbReference type="NCBI Taxonomy" id="224326"/>
    <lineage>
        <taxon>Bacteria</taxon>
        <taxon>Pseudomonadati</taxon>
        <taxon>Spirochaetota</taxon>
        <taxon>Spirochaetia</taxon>
        <taxon>Spirochaetales</taxon>
        <taxon>Borreliaceae</taxon>
        <taxon>Borreliella</taxon>
    </lineage>
</organism>
<evidence type="ECO:0000255" key="1">
    <source>
        <dbReference type="HAMAP-Rule" id="MF_00270"/>
    </source>
</evidence>
<evidence type="ECO:0000305" key="2"/>
<comment type="function">
    <text evidence="1">Binds as a heterodimer with protein bS6 to the central domain of the 16S rRNA, where it helps stabilize the platform of the 30S subunit.</text>
</comment>
<comment type="subunit">
    <text evidence="1">Part of the 30S ribosomal subunit. Forms a tight heterodimer with protein bS6.</text>
</comment>
<comment type="similarity">
    <text evidence="1">Belongs to the bacterial ribosomal protein bS18 family.</text>
</comment>
<accession>O51140</accession>
<feature type="chain" id="PRO_0000111123" description="Small ribosomal subunit protein bS18">
    <location>
        <begin position="1"/>
        <end position="96"/>
    </location>
</feature>
<protein>
    <recommendedName>
        <fullName evidence="1">Small ribosomal subunit protein bS18</fullName>
    </recommendedName>
    <alternativeName>
        <fullName evidence="2">30S ribosomal protein S18</fullName>
    </alternativeName>
</protein>
<gene>
    <name evidence="1" type="primary">rpsR</name>
    <name type="ordered locus">BB_0113</name>
</gene>
<keyword id="KW-0002">3D-structure</keyword>
<keyword id="KW-1185">Reference proteome</keyword>
<keyword id="KW-0687">Ribonucleoprotein</keyword>
<keyword id="KW-0689">Ribosomal protein</keyword>
<keyword id="KW-0694">RNA-binding</keyword>
<keyword id="KW-0699">rRNA-binding</keyword>